<name>GLMM_TRIV2</name>
<protein>
    <recommendedName>
        <fullName evidence="1">Phosphoglucosamine mutase</fullName>
        <ecNumber evidence="1">5.4.2.10</ecNumber>
    </recommendedName>
</protein>
<comment type="function">
    <text evidence="1">Catalyzes the conversion of glucosamine-6-phosphate to glucosamine-1-phosphate.</text>
</comment>
<comment type="catalytic activity">
    <reaction evidence="1">
        <text>alpha-D-glucosamine 1-phosphate = D-glucosamine 6-phosphate</text>
        <dbReference type="Rhea" id="RHEA:23424"/>
        <dbReference type="ChEBI" id="CHEBI:58516"/>
        <dbReference type="ChEBI" id="CHEBI:58725"/>
        <dbReference type="EC" id="5.4.2.10"/>
    </reaction>
</comment>
<comment type="cofactor">
    <cofactor evidence="1">
        <name>Mg(2+)</name>
        <dbReference type="ChEBI" id="CHEBI:18420"/>
    </cofactor>
    <text evidence="1">Binds 1 Mg(2+) ion per subunit.</text>
</comment>
<comment type="PTM">
    <text evidence="1">Activated by phosphorylation.</text>
</comment>
<comment type="similarity">
    <text evidence="1">Belongs to the phosphohexose mutase family.</text>
</comment>
<reference key="1">
    <citation type="journal article" date="2014" name="Stand. Genomic Sci.">
        <title>Complete genome sequence of Anabaena variabilis ATCC 29413.</title>
        <authorList>
            <person name="Thiel T."/>
            <person name="Pratte B.S."/>
            <person name="Zhong J."/>
            <person name="Goodwin L."/>
            <person name="Copeland A."/>
            <person name="Lucas S."/>
            <person name="Han C."/>
            <person name="Pitluck S."/>
            <person name="Land M.L."/>
            <person name="Kyrpides N.C."/>
            <person name="Woyke T."/>
        </authorList>
    </citation>
    <scope>NUCLEOTIDE SEQUENCE [LARGE SCALE GENOMIC DNA]</scope>
    <source>
        <strain>ATCC 29413 / PCC 7937</strain>
    </source>
</reference>
<dbReference type="EC" id="5.4.2.10" evidence="1"/>
<dbReference type="EMBL" id="CP000117">
    <property type="protein sequence ID" value="ABA23374.1"/>
    <property type="molecule type" value="Genomic_DNA"/>
</dbReference>
<dbReference type="SMR" id="Q3M6L2"/>
<dbReference type="STRING" id="240292.Ava_3769"/>
<dbReference type="KEGG" id="ava:Ava_3769"/>
<dbReference type="eggNOG" id="COG1109">
    <property type="taxonomic scope" value="Bacteria"/>
</dbReference>
<dbReference type="HOGENOM" id="CLU_016950_7_0_3"/>
<dbReference type="Proteomes" id="UP000002533">
    <property type="component" value="Chromosome"/>
</dbReference>
<dbReference type="GO" id="GO:0005829">
    <property type="term" value="C:cytosol"/>
    <property type="evidence" value="ECO:0007669"/>
    <property type="project" value="TreeGrafter"/>
</dbReference>
<dbReference type="GO" id="GO:0000287">
    <property type="term" value="F:magnesium ion binding"/>
    <property type="evidence" value="ECO:0007669"/>
    <property type="project" value="UniProtKB-UniRule"/>
</dbReference>
<dbReference type="GO" id="GO:0008966">
    <property type="term" value="F:phosphoglucosamine mutase activity"/>
    <property type="evidence" value="ECO:0007669"/>
    <property type="project" value="UniProtKB-UniRule"/>
</dbReference>
<dbReference type="GO" id="GO:0004615">
    <property type="term" value="F:phosphomannomutase activity"/>
    <property type="evidence" value="ECO:0007669"/>
    <property type="project" value="TreeGrafter"/>
</dbReference>
<dbReference type="GO" id="GO:0005975">
    <property type="term" value="P:carbohydrate metabolic process"/>
    <property type="evidence" value="ECO:0007669"/>
    <property type="project" value="InterPro"/>
</dbReference>
<dbReference type="GO" id="GO:0009252">
    <property type="term" value="P:peptidoglycan biosynthetic process"/>
    <property type="evidence" value="ECO:0007669"/>
    <property type="project" value="TreeGrafter"/>
</dbReference>
<dbReference type="GO" id="GO:0006048">
    <property type="term" value="P:UDP-N-acetylglucosamine biosynthetic process"/>
    <property type="evidence" value="ECO:0007669"/>
    <property type="project" value="TreeGrafter"/>
</dbReference>
<dbReference type="CDD" id="cd05802">
    <property type="entry name" value="GlmM"/>
    <property type="match status" value="1"/>
</dbReference>
<dbReference type="FunFam" id="3.30.310.50:FF:000001">
    <property type="entry name" value="Phosphoglucosamine mutase"/>
    <property type="match status" value="1"/>
</dbReference>
<dbReference type="FunFam" id="3.40.120.10:FF:000001">
    <property type="entry name" value="Phosphoglucosamine mutase"/>
    <property type="match status" value="1"/>
</dbReference>
<dbReference type="FunFam" id="3.40.120.10:FF:000002">
    <property type="entry name" value="Phosphoglucosamine mutase"/>
    <property type="match status" value="1"/>
</dbReference>
<dbReference type="FunFam" id="3.40.120.10:FF:000003">
    <property type="entry name" value="Phosphoglucosamine mutase"/>
    <property type="match status" value="1"/>
</dbReference>
<dbReference type="Gene3D" id="3.40.120.10">
    <property type="entry name" value="Alpha-D-Glucose-1,6-Bisphosphate, subunit A, domain 3"/>
    <property type="match status" value="3"/>
</dbReference>
<dbReference type="Gene3D" id="3.30.310.50">
    <property type="entry name" value="Alpha-D-phosphohexomutase, C-terminal domain"/>
    <property type="match status" value="1"/>
</dbReference>
<dbReference type="HAMAP" id="MF_01554_B">
    <property type="entry name" value="GlmM_B"/>
    <property type="match status" value="1"/>
</dbReference>
<dbReference type="InterPro" id="IPR005844">
    <property type="entry name" value="A-D-PHexomutase_a/b/a-I"/>
</dbReference>
<dbReference type="InterPro" id="IPR016055">
    <property type="entry name" value="A-D-PHexomutase_a/b/a-I/II/III"/>
</dbReference>
<dbReference type="InterPro" id="IPR005845">
    <property type="entry name" value="A-D-PHexomutase_a/b/a-II"/>
</dbReference>
<dbReference type="InterPro" id="IPR005846">
    <property type="entry name" value="A-D-PHexomutase_a/b/a-III"/>
</dbReference>
<dbReference type="InterPro" id="IPR005843">
    <property type="entry name" value="A-D-PHexomutase_C"/>
</dbReference>
<dbReference type="InterPro" id="IPR036900">
    <property type="entry name" value="A-D-PHexomutase_C_sf"/>
</dbReference>
<dbReference type="InterPro" id="IPR016066">
    <property type="entry name" value="A-D-PHexomutase_CS"/>
</dbReference>
<dbReference type="InterPro" id="IPR005841">
    <property type="entry name" value="Alpha-D-phosphohexomutase_SF"/>
</dbReference>
<dbReference type="InterPro" id="IPR006352">
    <property type="entry name" value="GlmM_bact"/>
</dbReference>
<dbReference type="InterPro" id="IPR050060">
    <property type="entry name" value="Phosphoglucosamine_mutase"/>
</dbReference>
<dbReference type="NCBIfam" id="TIGR01455">
    <property type="entry name" value="glmM"/>
    <property type="match status" value="1"/>
</dbReference>
<dbReference type="PANTHER" id="PTHR42946:SF1">
    <property type="entry name" value="PHOSPHOGLUCOMUTASE (ALPHA-D-GLUCOSE-1,6-BISPHOSPHATE-DEPENDENT)"/>
    <property type="match status" value="1"/>
</dbReference>
<dbReference type="PANTHER" id="PTHR42946">
    <property type="entry name" value="PHOSPHOHEXOSE MUTASE"/>
    <property type="match status" value="1"/>
</dbReference>
<dbReference type="Pfam" id="PF02878">
    <property type="entry name" value="PGM_PMM_I"/>
    <property type="match status" value="1"/>
</dbReference>
<dbReference type="Pfam" id="PF02879">
    <property type="entry name" value="PGM_PMM_II"/>
    <property type="match status" value="1"/>
</dbReference>
<dbReference type="Pfam" id="PF02880">
    <property type="entry name" value="PGM_PMM_III"/>
    <property type="match status" value="1"/>
</dbReference>
<dbReference type="Pfam" id="PF00408">
    <property type="entry name" value="PGM_PMM_IV"/>
    <property type="match status" value="1"/>
</dbReference>
<dbReference type="PRINTS" id="PR00509">
    <property type="entry name" value="PGMPMM"/>
</dbReference>
<dbReference type="SUPFAM" id="SSF55957">
    <property type="entry name" value="Phosphoglucomutase, C-terminal domain"/>
    <property type="match status" value="1"/>
</dbReference>
<dbReference type="SUPFAM" id="SSF53738">
    <property type="entry name" value="Phosphoglucomutase, first 3 domains"/>
    <property type="match status" value="3"/>
</dbReference>
<dbReference type="PROSITE" id="PS00710">
    <property type="entry name" value="PGM_PMM"/>
    <property type="match status" value="1"/>
</dbReference>
<proteinExistence type="inferred from homology"/>
<accession>Q3M6L2</accession>
<feature type="chain" id="PRO_0000301274" description="Phosphoglucosamine mutase">
    <location>
        <begin position="1"/>
        <end position="490"/>
    </location>
</feature>
<feature type="active site" description="Phosphoserine intermediate" evidence="1">
    <location>
        <position position="139"/>
    </location>
</feature>
<feature type="binding site" description="via phosphate group" evidence="1">
    <location>
        <position position="139"/>
    </location>
    <ligand>
        <name>Mg(2+)</name>
        <dbReference type="ChEBI" id="CHEBI:18420"/>
    </ligand>
</feature>
<feature type="binding site" evidence="1">
    <location>
        <position position="279"/>
    </location>
    <ligand>
        <name>Mg(2+)</name>
        <dbReference type="ChEBI" id="CHEBI:18420"/>
    </ligand>
</feature>
<feature type="binding site" evidence="1">
    <location>
        <position position="281"/>
    </location>
    <ligand>
        <name>Mg(2+)</name>
        <dbReference type="ChEBI" id="CHEBI:18420"/>
    </ligand>
</feature>
<feature type="binding site" evidence="1">
    <location>
        <position position="283"/>
    </location>
    <ligand>
        <name>Mg(2+)</name>
        <dbReference type="ChEBI" id="CHEBI:18420"/>
    </ligand>
</feature>
<feature type="modified residue" description="Phosphoserine" evidence="1">
    <location>
        <position position="139"/>
    </location>
</feature>
<keyword id="KW-0413">Isomerase</keyword>
<keyword id="KW-0460">Magnesium</keyword>
<keyword id="KW-0479">Metal-binding</keyword>
<keyword id="KW-0597">Phosphoprotein</keyword>
<sequence>MVSSITRIQNYVIDGAATSDGLATVLESNFAPSLISLPATPLFGTDGIRGKVGELLSAPLALQIGFWAGVVLRSHAGQLRPVILGQDSRNSSDMLAMALSAGLTAAGLEVWYLGLCPTPCVAYLTSVSEAIGGVMISASHNPPEDNGIKIFGANGGKLSQALQAEIEKGLRGNLPITSNVSNCGRHYSRRELVKDYGEALKRPWQNKVNLQGMKVVLDLAWGAAVGLAPSVFAEMGAEVISLHNAADGDRINVNCGSTHLEMLQAAVQEHNADLGFAFDGDADRVLAVDPTGRPVNGDYILYLWGLHLKQQNQLPDNLIVSTVMANLGFEKAWQQQGGKLIRTAVGDQYVQAEMIKTGAMLGGEQSGHILCSHYGMTGDGLLTALHLASLVKQSGVSLAELIDQSFQTYPQLLRNVRVVDRDRRLNWQNCTPVQQAIALAEKAMGDTGRILVRASGTEPVIRVMVEAANAELANYWTNELVAQVQQHLAP</sequence>
<gene>
    <name evidence="1" type="primary">glmM</name>
    <name type="ordered locus">Ava_3769</name>
</gene>
<evidence type="ECO:0000255" key="1">
    <source>
        <dbReference type="HAMAP-Rule" id="MF_01554"/>
    </source>
</evidence>
<organism>
    <name type="scientific">Trichormus variabilis (strain ATCC 29413 / PCC 7937)</name>
    <name type="common">Anabaena variabilis</name>
    <dbReference type="NCBI Taxonomy" id="240292"/>
    <lineage>
        <taxon>Bacteria</taxon>
        <taxon>Bacillati</taxon>
        <taxon>Cyanobacteriota</taxon>
        <taxon>Cyanophyceae</taxon>
        <taxon>Nostocales</taxon>
        <taxon>Nostocaceae</taxon>
        <taxon>Trichormus</taxon>
    </lineage>
</organism>